<dbReference type="EC" id="3.4.21.-"/>
<dbReference type="EC" id="2.7.7.48"/>
<dbReference type="EMBL" id="AF055887">
    <property type="protein sequence ID" value="AAC15983.1"/>
    <property type="molecule type" value="Genomic_RNA"/>
</dbReference>
<dbReference type="SMR" id="O72157"/>
<dbReference type="Proteomes" id="UP000001671">
    <property type="component" value="Segment"/>
</dbReference>
<dbReference type="GO" id="GO:0033644">
    <property type="term" value="C:host cell membrane"/>
    <property type="evidence" value="ECO:0007669"/>
    <property type="project" value="UniProtKB-SubCell"/>
</dbReference>
<dbReference type="GO" id="GO:0016020">
    <property type="term" value="C:membrane"/>
    <property type="evidence" value="ECO:0007669"/>
    <property type="project" value="UniProtKB-KW"/>
</dbReference>
<dbReference type="GO" id="GO:0000166">
    <property type="term" value="F:nucleotide binding"/>
    <property type="evidence" value="ECO:0007669"/>
    <property type="project" value="UniProtKB-KW"/>
</dbReference>
<dbReference type="GO" id="GO:0003723">
    <property type="term" value="F:RNA binding"/>
    <property type="evidence" value="ECO:0007669"/>
    <property type="project" value="InterPro"/>
</dbReference>
<dbReference type="GO" id="GO:0003968">
    <property type="term" value="F:RNA-directed RNA polymerase activity"/>
    <property type="evidence" value="ECO:0007669"/>
    <property type="project" value="UniProtKB-KW"/>
</dbReference>
<dbReference type="GO" id="GO:0004252">
    <property type="term" value="F:serine-type endopeptidase activity"/>
    <property type="evidence" value="ECO:0007669"/>
    <property type="project" value="InterPro"/>
</dbReference>
<dbReference type="GO" id="GO:0006351">
    <property type="term" value="P:DNA-templated transcription"/>
    <property type="evidence" value="ECO:0007669"/>
    <property type="project" value="InterPro"/>
</dbReference>
<dbReference type="GO" id="GO:0006508">
    <property type="term" value="P:proteolysis"/>
    <property type="evidence" value="ECO:0007669"/>
    <property type="project" value="UniProtKB-KW"/>
</dbReference>
<dbReference type="GO" id="GO:0075523">
    <property type="term" value="P:viral translational frameshifting"/>
    <property type="evidence" value="ECO:0007669"/>
    <property type="project" value="UniProtKB-KW"/>
</dbReference>
<dbReference type="CDD" id="cd23180">
    <property type="entry name" value="ps-ssRNAv_Solemoviridae_RdRp"/>
    <property type="match status" value="1"/>
</dbReference>
<dbReference type="Gene3D" id="2.40.10.10">
    <property type="entry name" value="Trypsin-like serine proteases"/>
    <property type="match status" value="2"/>
</dbReference>
<dbReference type="InterPro" id="IPR043502">
    <property type="entry name" value="DNA/RNA_pol_sf"/>
</dbReference>
<dbReference type="InterPro" id="IPR009003">
    <property type="entry name" value="Peptidase_S1_PA"/>
</dbReference>
<dbReference type="InterPro" id="IPR043504">
    <property type="entry name" value="Peptidase_S1_PA_chymotrypsin"/>
</dbReference>
<dbReference type="InterPro" id="IPR000382">
    <property type="entry name" value="Peptidase_S39B_luteovirus"/>
</dbReference>
<dbReference type="InterPro" id="IPR001795">
    <property type="entry name" value="RNA-dir_pol_luteovirus"/>
</dbReference>
<dbReference type="Pfam" id="PF02122">
    <property type="entry name" value="Peptidase_S39"/>
    <property type="match status" value="1"/>
</dbReference>
<dbReference type="Pfam" id="PF02123">
    <property type="entry name" value="RdRP_4"/>
    <property type="match status" value="1"/>
</dbReference>
<dbReference type="PRINTS" id="PR00914">
    <property type="entry name" value="LVIRUSRNAPOL"/>
</dbReference>
<dbReference type="SUPFAM" id="SSF56672">
    <property type="entry name" value="DNA/RNA polymerases"/>
    <property type="match status" value="1"/>
</dbReference>
<dbReference type="SUPFAM" id="SSF50494">
    <property type="entry name" value="Trypsin-like serine proteases"/>
    <property type="match status" value="1"/>
</dbReference>
<dbReference type="PROSITE" id="PS51868">
    <property type="entry name" value="PEPTIDASE_S39"/>
    <property type="match status" value="1"/>
</dbReference>
<evidence type="ECO:0000255" key="1"/>
<evidence type="ECO:0000255" key="2">
    <source>
        <dbReference type="PROSITE-ProRule" id="PRU01216"/>
    </source>
</evidence>
<evidence type="ECO:0000305" key="3"/>
<reference key="1">
    <citation type="journal article" date="1998" name="Arch. Virol.">
        <title>Nucleotide sequence of a resistance breaking mutant of southern bean mosaic virus.</title>
        <authorList>
            <person name="Lee L."/>
            <person name="Anderson E.J."/>
        </authorList>
    </citation>
    <scope>NUCLEOTIDE SEQUENCE [GENOMIC RNA]</scope>
    <source>
        <strain>SBMV-B</strain>
        <strain>SBMV-S</strain>
    </source>
</reference>
<reference key="2">
    <citation type="journal article" date="1998" name="Virus Genes">
        <title>The genome-linked protein (VPg) of southern bean mosaic virus is encoded by the ORF2.</title>
        <authorList>
            <person name="van der Wilk F."/>
            <person name="Verbeek M."/>
            <person name="Dullemans A."/>
            <person name="van den Heuvel J."/>
        </authorList>
    </citation>
    <scope>PROTEIN SEQUENCE OF 326-345</scope>
    <scope>CHARACTERIZATION OF VPG</scope>
</reference>
<reference key="3">
    <citation type="journal article" date="2007" name="Arch. Virol.">
        <title>Sobemoviruses possess a common CfMV-like genomic organization.</title>
        <authorList>
            <person name="Meier M."/>
            <person name="Truve E."/>
        </authorList>
    </citation>
    <scope>SEQUENCE REVISION TO 557</scope>
    <scope>GENOME REANNOTATION</scope>
    <scope>RIBOSOMAL FRAMESHIFT</scope>
</reference>
<organismHost>
    <name type="scientific">Glycine max</name>
    <name type="common">Soybean</name>
    <name type="synonym">Glycine hispida</name>
    <dbReference type="NCBI Taxonomy" id="3847"/>
</organismHost>
<organismHost>
    <name type="scientific">Phaseolus vulgaris</name>
    <name type="common">Kidney bean</name>
    <name type="synonym">French bean</name>
    <dbReference type="NCBI Taxonomy" id="3885"/>
</organismHost>
<organismHost>
    <name type="scientific">Vigna mungo</name>
    <name type="common">Black gram</name>
    <name type="synonym">Phaseolus mungo</name>
    <dbReference type="NCBI Taxonomy" id="3915"/>
</organismHost>
<organismHost>
    <name type="scientific">Vigna unguiculata</name>
    <name type="common">Cowpea</name>
    <dbReference type="NCBI Taxonomy" id="3917"/>
</organismHost>
<protein>
    <recommendedName>
        <fullName>Replicase polyprotein P2AB</fullName>
    </recommendedName>
    <component>
        <recommendedName>
            <fullName>N-terminal protein</fullName>
        </recommendedName>
    </component>
    <component>
        <recommendedName>
            <fullName>Serine protease</fullName>
            <ecNumber>3.4.21.-</ecNumber>
        </recommendedName>
    </component>
    <component>
        <recommendedName>
            <fullName>VPg</fullName>
        </recommendedName>
    </component>
    <component>
        <recommendedName>
            <fullName>RNA-directed RNA polymerase</fullName>
            <ecNumber>2.7.7.48</ecNumber>
        </recommendedName>
        <alternativeName>
            <fullName>RdRp</fullName>
        </alternativeName>
    </component>
</protein>
<sequence>MYHPGRSPSFLITLANVICAAILFDIHTGGYQPGSLIPIVAWMTPFVTLLWLSASFATYLYKYVRTRLLPEEKVARVYYTAQSAPYFDPALGVMMQFAPSHGGASIEVQVNPSWISLLGGSLKINGDDASNESAVLGSFYSSVKPGDEPASLVAIKSGPQTIGFGCRTKIDGDDCLFTANHVWNNSMRPTALAKRGKQVAIEDWETPLSCDHKMLDFVVVRVPKHVWSKLGVKATQLVCPSDKDAVTCYGGSSSDNLLSGTGVCSKVDFSWKLTHSCPTAAGWSGTPIYSSRGVVGMHVGFEDIGKLNRGVNAFYVSNYLLRSQETLPPELSVIEIPFEDVETRSYEFIEVEIKGRGKAKLGKREFAWIPESGKYWADDDDDSLPPPPKVVDGKMVWSSAQETVAEPLNLPAGGRVKALAALSQLAGYDFKEGEAASTRGMPLRFVGQSACKFRELCRKDTPDEVLRATRVFPELSDFSWPERGSKAELHSLLLQAGKFNPTGIPRNLEGACQNLLERYPASKSCYCLRGEAWSFDAVYEEVCKKAQSAEINEKASPGVPLSRLASTNKDLLKRHLELVALCVTERLFLLSEAEDLLDESPVDLVRRGLCDPVRLFVKQEPHASRKVREGRFRLISSVSLVDQLVERMLFGPQNQLEIAEWEHIPSKPGMGLSLRQQAKSLFDDLRVKHSRCPAAEADISGFDWSVQDWELWADVEMRIVLGGFGHKLAKAAQNRFSCFMNSVFQLSDGTLIEQQLPGIMKSGSYCTSSTNSRIRCLMAELIGSPWCIAMGDDSVEGWVDGAKDKYMRLGHTCKDYKPCATTISGRLYEVEFCSHVIREDRCWLASWPKTLFKYLSEGKWFFEDLERDVSSSPHWPRIRHYVVGNTPSPHKTNLQNQSPRYGEEVDKTTVNQGYSEHSGSPGHSIEEAQEPEAAPFCCEAASVYPGWGVHGPYCSGDYGSLT</sequence>
<organism>
    <name type="scientific">Southern bean mosaic virus (isolate Bean/United States/Arkansas)</name>
    <name type="common">SBMV</name>
    <dbReference type="NCBI Taxonomy" id="652938"/>
    <lineage>
        <taxon>Viruses</taxon>
        <taxon>Riboviria</taxon>
        <taxon>Orthornavirae</taxon>
        <taxon>Pisuviricota</taxon>
        <taxon>Pisoniviricetes</taxon>
        <taxon>Sobelivirales</taxon>
        <taxon>Solemoviridae</taxon>
        <taxon>Sobemovirus</taxon>
        <taxon>Southern bean mosaic virus</taxon>
    </lineage>
</organism>
<name>RDRP_SBMVA</name>
<comment type="function">
    <molecule>Serine protease</molecule>
    <text>Responsible for cleavages of polyprotein P2A and replicase polyprotein P2AB.</text>
</comment>
<comment type="function">
    <molecule>VPg</molecule>
    <text>Covalently attached to the 5' extremity of the genomic and subgenomic RNAs. It may serve as a primer for the replicase.</text>
</comment>
<comment type="function">
    <molecule>RNA-directed RNA polymerase</molecule>
    <text evidence="3">Replicates the viral genome.</text>
</comment>
<comment type="catalytic activity">
    <reaction>
        <text>RNA(n) + a ribonucleoside 5'-triphosphate = RNA(n+1) + diphosphate</text>
        <dbReference type="Rhea" id="RHEA:21248"/>
        <dbReference type="Rhea" id="RHEA-COMP:14527"/>
        <dbReference type="Rhea" id="RHEA-COMP:17342"/>
        <dbReference type="ChEBI" id="CHEBI:33019"/>
        <dbReference type="ChEBI" id="CHEBI:61557"/>
        <dbReference type="ChEBI" id="CHEBI:140395"/>
        <dbReference type="EC" id="2.7.7.48"/>
    </reaction>
</comment>
<comment type="subcellular location">
    <molecule>N-terminal protein</molecule>
    <subcellularLocation>
        <location evidence="3">Host membrane</location>
        <topology evidence="3">Multi-pass membrane protein</topology>
    </subcellularLocation>
</comment>
<comment type="subcellular location">
    <molecule>Replicase polyprotein P2AB</molecule>
    <subcellularLocation>
        <location evidence="3">Host membrane</location>
        <topology evidence="3">Multi-pass membrane protein</topology>
    </subcellularLocation>
</comment>
<comment type="alternative products">
    <event type="ribosomal frameshifting"/>
    <isoform>
        <id>O72157-1</id>
        <name>Replicase polyprotein P2AB</name>
        <sequence type="displayed"/>
    </isoform>
    <isoform>
        <id>O73564-1</id>
        <name>Polyprotein P2A</name>
        <sequence type="external"/>
    </isoform>
</comment>
<comment type="PTM">
    <text>The polyprotein is proteolytically cleaved into several chains by the viral protease.</text>
</comment>
<comment type="miscellaneous">
    <molecule>Isoform Replicase polyprotein P2AB</molecule>
    <text>Produced by -1 ribosomal frameshifting at the 2A-2B genes boundary.</text>
</comment>
<keyword id="KW-0191">Covalent protein-RNA linkage</keyword>
<keyword id="KW-0903">Direct protein sequencing</keyword>
<keyword id="KW-1043">Host membrane</keyword>
<keyword id="KW-0378">Hydrolase</keyword>
<keyword id="KW-0472">Membrane</keyword>
<keyword id="KW-0547">Nucleotide-binding</keyword>
<keyword id="KW-0548">Nucleotidyltransferase</keyword>
<keyword id="KW-0645">Protease</keyword>
<keyword id="KW-1185">Reference proteome</keyword>
<keyword id="KW-0688">Ribosomal frameshifting</keyword>
<keyword id="KW-0696">RNA-directed RNA polymerase</keyword>
<keyword id="KW-0720">Serine protease</keyword>
<keyword id="KW-0808">Transferase</keyword>
<keyword id="KW-0812">Transmembrane</keyword>
<keyword id="KW-1133">Transmembrane helix</keyword>
<keyword id="KW-0693">Viral RNA replication</keyword>
<gene>
    <name type="ORF">ORF2A-2B</name>
</gene>
<proteinExistence type="evidence at protein level"/>
<accession>O72157</accession>
<feature type="chain" id="PRO_0000402470" description="Replicase polyprotein P2AB">
    <location>
        <begin position="1"/>
        <end position="962"/>
    </location>
</feature>
<feature type="chain" id="PRO_0000409847" description="N-terminal protein" evidence="1">
    <location>
        <begin position="1"/>
        <end position="132"/>
    </location>
</feature>
<feature type="chain" id="PRO_0000409848" description="Serine protease" evidence="1">
    <location>
        <begin position="133"/>
        <end position="325"/>
    </location>
</feature>
<feature type="chain" id="PRO_0000409849" description="VPg" evidence="1">
    <location>
        <begin position="326"/>
        <end position="402"/>
    </location>
</feature>
<feature type="chain" id="PRO_0000409850" description="RNA-directed RNA polymerase" evidence="1">
    <location>
        <begin position="403"/>
        <end position="962"/>
    </location>
</feature>
<feature type="transmembrane region" description="Helical" evidence="1">
    <location>
        <begin position="10"/>
        <end position="30"/>
    </location>
</feature>
<feature type="transmembrane region" description="Helical" evidence="1">
    <location>
        <begin position="36"/>
        <end position="56"/>
    </location>
</feature>
<feature type="transmembrane region" description="Helical" evidence="1">
    <location>
        <begin position="74"/>
        <end position="96"/>
    </location>
</feature>
<feature type="domain" description="Peptidase S39" evidence="2">
    <location>
        <begin position="135"/>
        <end position="335"/>
    </location>
</feature>
<feature type="domain" description="RdRp catalytic">
    <location>
        <begin position="692"/>
        <end position="806"/>
    </location>
</feature>
<feature type="active site" description="For protease activity" evidence="2">
    <location>
        <position position="181"/>
    </location>
</feature>
<feature type="active site" description="For protease activity" evidence="2">
    <location>
        <position position="216"/>
    </location>
</feature>
<feature type="active site" description="For protease activity" evidence="2">
    <location>
        <position position="284"/>
    </location>
</feature>
<feature type="site" description="Cleavage; by viral serine protease" evidence="1">
    <location>
        <begin position="132"/>
        <end position="133"/>
    </location>
</feature>
<feature type="site" description="Cleavage; by viral serine protease" evidence="1">
    <location>
        <begin position="325"/>
        <end position="326"/>
    </location>
</feature>
<feature type="site" description="Cleavage; by viral serine protease" evidence="1">
    <location>
        <begin position="402"/>
        <end position="403"/>
    </location>
</feature>